<feature type="chain" id="PRO_0000297867" description="Flap endonuclease Xni">
    <location>
        <begin position="1"/>
        <end position="257"/>
    </location>
</feature>
<feature type="domain" description="5'-3' exonuclease" evidence="1">
    <location>
        <begin position="169"/>
        <end position="256"/>
    </location>
</feature>
<feature type="region of interest" description="Interaction with DNA" evidence="1">
    <location>
        <begin position="192"/>
        <end position="197"/>
    </location>
</feature>
<feature type="binding site" evidence="1">
    <location>
        <position position="112"/>
    </location>
    <ligand>
        <name>Mg(2+)</name>
        <dbReference type="ChEBI" id="CHEBI:18420"/>
    </ligand>
</feature>
<feature type="binding site" evidence="1">
    <location>
        <position position="179"/>
    </location>
    <ligand>
        <name>K(+)</name>
        <dbReference type="ChEBI" id="CHEBI:29103"/>
    </ligand>
</feature>
<feature type="binding site" evidence="1">
    <location>
        <position position="180"/>
    </location>
    <ligand>
        <name>K(+)</name>
        <dbReference type="ChEBI" id="CHEBI:29103"/>
    </ligand>
</feature>
<feature type="binding site" evidence="1">
    <location>
        <position position="188"/>
    </location>
    <ligand>
        <name>K(+)</name>
        <dbReference type="ChEBI" id="CHEBI:29103"/>
    </ligand>
</feature>
<feature type="binding site" evidence="1">
    <location>
        <position position="190"/>
    </location>
    <ligand>
        <name>K(+)</name>
        <dbReference type="ChEBI" id="CHEBI:29103"/>
    </ligand>
</feature>
<feature type="binding site" evidence="1">
    <location>
        <position position="193"/>
    </location>
    <ligand>
        <name>K(+)</name>
        <dbReference type="ChEBI" id="CHEBI:29103"/>
    </ligand>
</feature>
<proteinExistence type="inferred from homology"/>
<reference key="1">
    <citation type="journal article" date="2005" name="Genome Res.">
        <title>Coping with cold: the genome of the versatile marine Antarctica bacterium Pseudoalteromonas haloplanktis TAC125.</title>
        <authorList>
            <person name="Medigue C."/>
            <person name="Krin E."/>
            <person name="Pascal G."/>
            <person name="Barbe V."/>
            <person name="Bernsel A."/>
            <person name="Bertin P.N."/>
            <person name="Cheung F."/>
            <person name="Cruveiller S."/>
            <person name="D'Amico S."/>
            <person name="Duilio A."/>
            <person name="Fang G."/>
            <person name="Feller G."/>
            <person name="Ho C."/>
            <person name="Mangenot S."/>
            <person name="Marino G."/>
            <person name="Nilsson J."/>
            <person name="Parrilli E."/>
            <person name="Rocha E.P.C."/>
            <person name="Rouy Z."/>
            <person name="Sekowska A."/>
            <person name="Tutino M.L."/>
            <person name="Vallenet D."/>
            <person name="von Heijne G."/>
            <person name="Danchin A."/>
        </authorList>
    </citation>
    <scope>NUCLEOTIDE SEQUENCE [LARGE SCALE GENOMIC DNA]</scope>
    <source>
        <strain>TAC 125</strain>
    </source>
</reference>
<gene>
    <name evidence="1" type="primary">xni</name>
    <name evidence="1" type="synonym">ygdG</name>
    <name type="ordered locus">PSHAb0468</name>
</gene>
<evidence type="ECO:0000255" key="1">
    <source>
        <dbReference type="HAMAP-Rule" id="MF_01192"/>
    </source>
</evidence>
<sequence length="257" mass="28983">MKPHLLLIDALNLIRRIYAVDANQKHHSDEQMLKASCARVAHACSKLLSSTKATHAIAVFDGDKSWRYHFYKDYKHSRAPMPQILKDALVQFKAAIEETGIVVFEPINDEADDIIATLANKASHNNISSVIVSTDKGFLPFLNEHIAVYDYFKKHYLDQDSIKQRFGVEQKKLVEFWAFAGDKTNDIPGVKGIGTKSAQLLVNNYSSVEDALNDDALSASLRKKLTENMDMYVISKQLVSLRTDINLGFSLKQLRLN</sequence>
<organism>
    <name type="scientific">Pseudoalteromonas translucida (strain TAC 125)</name>
    <dbReference type="NCBI Taxonomy" id="326442"/>
    <lineage>
        <taxon>Bacteria</taxon>
        <taxon>Pseudomonadati</taxon>
        <taxon>Pseudomonadota</taxon>
        <taxon>Gammaproteobacteria</taxon>
        <taxon>Alteromonadales</taxon>
        <taxon>Pseudoalteromonadaceae</taxon>
        <taxon>Pseudoalteromonas</taxon>
    </lineage>
</organism>
<comment type="function">
    <text evidence="1">Has flap endonuclease activity. During DNA replication, flap endonucleases cleave the 5'-overhanging flap structure that is generated by displacement synthesis when DNA polymerase encounters the 5'-end of a downstream Okazaki fragment.</text>
</comment>
<comment type="cofactor">
    <cofactor evidence="1">
        <name>Mg(2+)</name>
        <dbReference type="ChEBI" id="CHEBI:18420"/>
    </cofactor>
    <text evidence="1">Binds 2 Mg(2+) per subunit. Only one magnesium ion has a direct interaction with the protein, the other interactions are indirect.</text>
</comment>
<comment type="cofactor">
    <cofactor evidence="1">
        <name>K(+)</name>
        <dbReference type="ChEBI" id="CHEBI:29103"/>
    </cofactor>
    <text evidence="1">Binds 1 K(+) per subunit. The potassium ion strongly increases the affinity for DNA.</text>
</comment>
<comment type="similarity">
    <text evidence="1">Belongs to the Xni family.</text>
</comment>
<name>XNI_PSET1</name>
<dbReference type="EC" id="3.1.-.-" evidence="1"/>
<dbReference type="EMBL" id="CR954247">
    <property type="protein sequence ID" value="CAI89505.1"/>
    <property type="molecule type" value="Genomic_DNA"/>
</dbReference>
<dbReference type="SMR" id="Q3ICC5"/>
<dbReference type="STRING" id="326442.PSHAb0468"/>
<dbReference type="KEGG" id="pha:PSHAb0468"/>
<dbReference type="PATRIC" id="fig|326442.8.peg.3376"/>
<dbReference type="eggNOG" id="COG0258">
    <property type="taxonomic scope" value="Bacteria"/>
</dbReference>
<dbReference type="HOGENOM" id="CLU_004675_1_2_6"/>
<dbReference type="BioCyc" id="PHAL326442:PSHA_RS17095-MONOMER"/>
<dbReference type="Proteomes" id="UP000006843">
    <property type="component" value="Chromosome II"/>
</dbReference>
<dbReference type="GO" id="GO:0008409">
    <property type="term" value="F:5'-3' exonuclease activity"/>
    <property type="evidence" value="ECO:0007669"/>
    <property type="project" value="InterPro"/>
</dbReference>
<dbReference type="GO" id="GO:0017108">
    <property type="term" value="F:5'-flap endonuclease activity"/>
    <property type="evidence" value="ECO:0007669"/>
    <property type="project" value="UniProtKB-UniRule"/>
</dbReference>
<dbReference type="GO" id="GO:0003677">
    <property type="term" value="F:DNA binding"/>
    <property type="evidence" value="ECO:0007669"/>
    <property type="project" value="UniProtKB-UniRule"/>
</dbReference>
<dbReference type="GO" id="GO:0000287">
    <property type="term" value="F:magnesium ion binding"/>
    <property type="evidence" value="ECO:0007669"/>
    <property type="project" value="UniProtKB-UniRule"/>
</dbReference>
<dbReference type="GO" id="GO:0030955">
    <property type="term" value="F:potassium ion binding"/>
    <property type="evidence" value="ECO:0007669"/>
    <property type="project" value="UniProtKB-UniRule"/>
</dbReference>
<dbReference type="GO" id="GO:0033567">
    <property type="term" value="P:DNA replication, Okazaki fragment processing"/>
    <property type="evidence" value="ECO:0007669"/>
    <property type="project" value="UniProtKB-UniRule"/>
</dbReference>
<dbReference type="CDD" id="cd09898">
    <property type="entry name" value="H3TH_53EXO"/>
    <property type="match status" value="1"/>
</dbReference>
<dbReference type="CDD" id="cd09859">
    <property type="entry name" value="PIN_53EXO"/>
    <property type="match status" value="1"/>
</dbReference>
<dbReference type="FunFam" id="1.10.150.20:FF:000003">
    <property type="entry name" value="DNA polymerase I"/>
    <property type="match status" value="1"/>
</dbReference>
<dbReference type="Gene3D" id="1.10.150.20">
    <property type="entry name" value="5' to 3' exonuclease, C-terminal subdomain"/>
    <property type="match status" value="1"/>
</dbReference>
<dbReference type="Gene3D" id="3.40.50.1010">
    <property type="entry name" value="5'-nuclease"/>
    <property type="match status" value="1"/>
</dbReference>
<dbReference type="HAMAP" id="MF_01192">
    <property type="entry name" value="Xni"/>
    <property type="match status" value="1"/>
</dbReference>
<dbReference type="InterPro" id="IPR020046">
    <property type="entry name" value="5-3_exonucl_a-hlix_arch_N"/>
</dbReference>
<dbReference type="InterPro" id="IPR002421">
    <property type="entry name" value="5-3_exonuclease"/>
</dbReference>
<dbReference type="InterPro" id="IPR036279">
    <property type="entry name" value="5-3_exonuclease_C_sf"/>
</dbReference>
<dbReference type="InterPro" id="IPR020045">
    <property type="entry name" value="DNA_polI_H3TH"/>
</dbReference>
<dbReference type="InterPro" id="IPR038969">
    <property type="entry name" value="FEN"/>
</dbReference>
<dbReference type="InterPro" id="IPR008918">
    <property type="entry name" value="HhH2"/>
</dbReference>
<dbReference type="InterPro" id="IPR029060">
    <property type="entry name" value="PIN-like_dom_sf"/>
</dbReference>
<dbReference type="InterPro" id="IPR022895">
    <property type="entry name" value="Xni"/>
</dbReference>
<dbReference type="NCBIfam" id="NF007017">
    <property type="entry name" value="PRK09482.1"/>
    <property type="match status" value="1"/>
</dbReference>
<dbReference type="PANTHER" id="PTHR42646:SF2">
    <property type="entry name" value="5'-3' EXONUCLEASE FAMILY PROTEIN"/>
    <property type="match status" value="1"/>
</dbReference>
<dbReference type="PANTHER" id="PTHR42646">
    <property type="entry name" value="FLAP ENDONUCLEASE XNI"/>
    <property type="match status" value="1"/>
</dbReference>
<dbReference type="Pfam" id="PF01367">
    <property type="entry name" value="5_3_exonuc"/>
    <property type="match status" value="1"/>
</dbReference>
<dbReference type="Pfam" id="PF02739">
    <property type="entry name" value="5_3_exonuc_N"/>
    <property type="match status" value="1"/>
</dbReference>
<dbReference type="SMART" id="SM00475">
    <property type="entry name" value="53EXOc"/>
    <property type="match status" value="1"/>
</dbReference>
<dbReference type="SMART" id="SM00279">
    <property type="entry name" value="HhH2"/>
    <property type="match status" value="1"/>
</dbReference>
<dbReference type="SUPFAM" id="SSF47807">
    <property type="entry name" value="5' to 3' exonuclease, C-terminal subdomain"/>
    <property type="match status" value="1"/>
</dbReference>
<dbReference type="SUPFAM" id="SSF88723">
    <property type="entry name" value="PIN domain-like"/>
    <property type="match status" value="1"/>
</dbReference>
<protein>
    <recommendedName>
        <fullName evidence="1">Flap endonuclease Xni</fullName>
        <shortName evidence="1">FEN</shortName>
        <ecNumber evidence="1">3.1.-.-</ecNumber>
    </recommendedName>
</protein>
<accession>Q3ICC5</accession>
<keyword id="KW-0238">DNA-binding</keyword>
<keyword id="KW-0255">Endonuclease</keyword>
<keyword id="KW-0378">Hydrolase</keyword>
<keyword id="KW-0460">Magnesium</keyword>
<keyword id="KW-0479">Metal-binding</keyword>
<keyword id="KW-0540">Nuclease</keyword>
<keyword id="KW-0630">Potassium</keyword>
<keyword id="KW-1185">Reference proteome</keyword>